<evidence type="ECO:0000250" key="1"/>
<evidence type="ECO:0000255" key="2"/>
<evidence type="ECO:0000269" key="3">
    <source>
    </source>
</evidence>
<evidence type="ECO:0000305" key="4"/>
<evidence type="ECO:0007829" key="5">
    <source>
        <dbReference type="PDB" id="1SPI"/>
    </source>
</evidence>
<keyword id="KW-0002">3D-structure</keyword>
<keyword id="KW-0113">Calvin cycle</keyword>
<keyword id="KW-0119">Carbohydrate metabolism</keyword>
<keyword id="KW-0150">Chloroplast</keyword>
<keyword id="KW-0903">Direct protein sequencing</keyword>
<keyword id="KW-1015">Disulfide bond</keyword>
<keyword id="KW-0378">Hydrolase</keyword>
<keyword id="KW-0460">Magnesium</keyword>
<keyword id="KW-0479">Metal-binding</keyword>
<keyword id="KW-0934">Plastid</keyword>
<keyword id="KW-1185">Reference proteome</keyword>
<keyword id="KW-0809">Transit peptide</keyword>
<sequence length="415" mass="45230">MASIGPATTTAVKLRSSIFNPQSSTLSPSQQCITFTKSLHSFPTATRHNVASGVRCMAAVGEAATETKARTRSKYEIETLTGWLLKQEMAGVIDAELTIVLSSISLACKQIASLVQRAGISNLTGIQGAVNIQGEDQKKLDVVSNEVFSSCLRSSGRTGIIASEEEDVPVAVEESYSGNYIVVFDPLDGSSNIDAAVSTGSIFGIYSPNDECIVDSDHDDESQLSAEEQRCVVNVCQPGDNLLAAGYCMYSSSVIFVLTIGKGVYAFTLDPMYGEFVLTSEKIQIPKAGKIYSFNEGNYKMWDDKLKKYMDDLKEPGESQKPYSSRYIGSLVGDFHRTLLYGGIYGYPRDAKSKNGKLRLLYECAPMSFIVEQAGGKGSDGHQRILDIQPTEIHQRVPLYIGSVEEVEKLEKYLA</sequence>
<name>F16P1_SPIOL</name>
<organism>
    <name type="scientific">Spinacia oleracea</name>
    <name type="common">Spinach</name>
    <dbReference type="NCBI Taxonomy" id="3562"/>
    <lineage>
        <taxon>Eukaryota</taxon>
        <taxon>Viridiplantae</taxon>
        <taxon>Streptophyta</taxon>
        <taxon>Embryophyta</taxon>
        <taxon>Tracheophyta</taxon>
        <taxon>Spermatophyta</taxon>
        <taxon>Magnoliopsida</taxon>
        <taxon>eudicotyledons</taxon>
        <taxon>Gunneridae</taxon>
        <taxon>Pentapetalae</taxon>
        <taxon>Caryophyllales</taxon>
        <taxon>Chenopodiaceae</taxon>
        <taxon>Chenopodioideae</taxon>
        <taxon>Anserineae</taxon>
        <taxon>Spinacia</taxon>
    </lineage>
</organism>
<dbReference type="EC" id="3.1.3.11"/>
<dbReference type="EMBL" id="L76555">
    <property type="protein sequence ID" value="AAD10207.1"/>
    <property type="molecule type" value="mRNA"/>
</dbReference>
<dbReference type="PIR" id="T09085">
    <property type="entry name" value="T09085"/>
</dbReference>
<dbReference type="RefSeq" id="NP_001413416.1">
    <property type="nucleotide sequence ID" value="NM_001426487.1"/>
</dbReference>
<dbReference type="PDB" id="1SPI">
    <property type="method" value="X-ray"/>
    <property type="resolution" value="2.80 A"/>
    <property type="chains" value="A/B/C/D=58-415"/>
</dbReference>
<dbReference type="PDBsum" id="1SPI"/>
<dbReference type="SMR" id="P22418"/>
<dbReference type="GeneID" id="110804252"/>
<dbReference type="OrthoDB" id="10256725at2759"/>
<dbReference type="BRENDA" id="3.1.3.11">
    <property type="organism ID" value="5812"/>
</dbReference>
<dbReference type="SABIO-RK" id="P22418"/>
<dbReference type="UniPathway" id="UPA00116"/>
<dbReference type="EvolutionaryTrace" id="P22418"/>
<dbReference type="Proteomes" id="UP001155700">
    <property type="component" value="Unplaced"/>
</dbReference>
<dbReference type="GO" id="GO:0009507">
    <property type="term" value="C:chloroplast"/>
    <property type="evidence" value="ECO:0007669"/>
    <property type="project" value="UniProtKB-SubCell"/>
</dbReference>
<dbReference type="GO" id="GO:0005737">
    <property type="term" value="C:cytoplasm"/>
    <property type="evidence" value="ECO:0000318"/>
    <property type="project" value="GO_Central"/>
</dbReference>
<dbReference type="GO" id="GO:0005829">
    <property type="term" value="C:cytosol"/>
    <property type="evidence" value="ECO:0000318"/>
    <property type="project" value="GO_Central"/>
</dbReference>
<dbReference type="GO" id="GO:0042132">
    <property type="term" value="F:fructose 1,6-bisphosphate 1-phosphatase activity"/>
    <property type="evidence" value="ECO:0000318"/>
    <property type="project" value="GO_Central"/>
</dbReference>
<dbReference type="GO" id="GO:0046872">
    <property type="term" value="F:metal ion binding"/>
    <property type="evidence" value="ECO:0007669"/>
    <property type="project" value="UniProtKB-KW"/>
</dbReference>
<dbReference type="GO" id="GO:0030388">
    <property type="term" value="P:fructose 1,6-bisphosphate metabolic process"/>
    <property type="evidence" value="ECO:0000318"/>
    <property type="project" value="GO_Central"/>
</dbReference>
<dbReference type="GO" id="GO:0006002">
    <property type="term" value="P:fructose 6-phosphate metabolic process"/>
    <property type="evidence" value="ECO:0000318"/>
    <property type="project" value="GO_Central"/>
</dbReference>
<dbReference type="GO" id="GO:0006000">
    <property type="term" value="P:fructose metabolic process"/>
    <property type="evidence" value="ECO:0000318"/>
    <property type="project" value="GO_Central"/>
</dbReference>
<dbReference type="GO" id="GO:0006094">
    <property type="term" value="P:gluconeogenesis"/>
    <property type="evidence" value="ECO:0000318"/>
    <property type="project" value="GO_Central"/>
</dbReference>
<dbReference type="GO" id="GO:0019253">
    <property type="term" value="P:reductive pentose-phosphate cycle"/>
    <property type="evidence" value="ECO:0007669"/>
    <property type="project" value="UniProtKB-UniPathway"/>
</dbReference>
<dbReference type="GO" id="GO:0005986">
    <property type="term" value="P:sucrose biosynthetic process"/>
    <property type="evidence" value="ECO:0007669"/>
    <property type="project" value="TreeGrafter"/>
</dbReference>
<dbReference type="CDD" id="cd00354">
    <property type="entry name" value="FBPase"/>
    <property type="match status" value="1"/>
</dbReference>
<dbReference type="FunFam" id="3.40.190.80:FF:000001">
    <property type="entry name" value="Fructose-1,6-bisphosphatase class 1"/>
    <property type="match status" value="1"/>
</dbReference>
<dbReference type="FunFam" id="3.30.540.10:FF:000014">
    <property type="entry name" value="Fructose-1,6-bisphosphatase, chloroplastic"/>
    <property type="match status" value="1"/>
</dbReference>
<dbReference type="Gene3D" id="3.40.190.80">
    <property type="match status" value="1"/>
</dbReference>
<dbReference type="Gene3D" id="3.30.540.10">
    <property type="entry name" value="Fructose-1,6-Bisphosphatase, subunit A, domain 1"/>
    <property type="match status" value="1"/>
</dbReference>
<dbReference type="HAMAP" id="MF_01855">
    <property type="entry name" value="FBPase_class1"/>
    <property type="match status" value="1"/>
</dbReference>
<dbReference type="InterPro" id="IPR044015">
    <property type="entry name" value="FBPase_C_dom"/>
</dbReference>
<dbReference type="InterPro" id="IPR000146">
    <property type="entry name" value="FBPase_class-1"/>
</dbReference>
<dbReference type="InterPro" id="IPR033391">
    <property type="entry name" value="FBPase_N"/>
</dbReference>
<dbReference type="InterPro" id="IPR028343">
    <property type="entry name" value="FBPtase"/>
</dbReference>
<dbReference type="InterPro" id="IPR020548">
    <property type="entry name" value="Fructose_bisphosphatase_AS"/>
</dbReference>
<dbReference type="NCBIfam" id="NF006778">
    <property type="entry name" value="PRK09293.1-1"/>
    <property type="match status" value="1"/>
</dbReference>
<dbReference type="PANTHER" id="PTHR11556">
    <property type="entry name" value="FRUCTOSE-1,6-BISPHOSPHATASE-RELATED"/>
    <property type="match status" value="1"/>
</dbReference>
<dbReference type="PANTHER" id="PTHR11556:SF1">
    <property type="entry name" value="FRUCTOSE-BISPHOSPHATASE"/>
    <property type="match status" value="1"/>
</dbReference>
<dbReference type="Pfam" id="PF00316">
    <property type="entry name" value="FBPase"/>
    <property type="match status" value="1"/>
</dbReference>
<dbReference type="Pfam" id="PF18913">
    <property type="entry name" value="FBPase_C"/>
    <property type="match status" value="1"/>
</dbReference>
<dbReference type="PIRSF" id="PIRSF500210">
    <property type="entry name" value="FBPtase"/>
    <property type="match status" value="1"/>
</dbReference>
<dbReference type="PIRSF" id="PIRSF000904">
    <property type="entry name" value="FBPtase_SBPase"/>
    <property type="match status" value="1"/>
</dbReference>
<dbReference type="PRINTS" id="PR00115">
    <property type="entry name" value="F16BPHPHTASE"/>
</dbReference>
<dbReference type="SUPFAM" id="SSF56655">
    <property type="entry name" value="Carbohydrate phosphatase"/>
    <property type="match status" value="1"/>
</dbReference>
<dbReference type="PROSITE" id="PS00124">
    <property type="entry name" value="FBPASE"/>
    <property type="match status" value="1"/>
</dbReference>
<protein>
    <recommendedName>
        <fullName>Fructose-1,6-bisphosphatase, chloroplastic</fullName>
        <shortName>FBPase</shortName>
        <ecNumber>3.1.3.11</ecNumber>
    </recommendedName>
    <alternativeName>
        <fullName>D-fructose-1,6-bisphosphate 1-phosphohydrolase</fullName>
    </alternativeName>
</protein>
<proteinExistence type="evidence at protein level"/>
<feature type="transit peptide" description="Chloroplast" evidence="3">
    <location>
        <begin position="1"/>
        <end position="57"/>
    </location>
</feature>
<feature type="chain" id="PRO_0000008818" description="Fructose-1,6-bisphosphatase, chloroplastic">
    <location>
        <begin position="58"/>
        <end position="415"/>
    </location>
</feature>
<feature type="region of interest" description="Involved in light regulation" evidence="2">
    <location>
        <begin position="207"/>
        <end position="232"/>
    </location>
</feature>
<feature type="binding site" evidence="1">
    <location>
        <position position="135"/>
    </location>
    <ligand>
        <name>Mg(2+)</name>
        <dbReference type="ChEBI" id="CHEBI:18420"/>
        <label>1</label>
    </ligand>
</feature>
<feature type="binding site" evidence="1">
    <location>
        <position position="164"/>
    </location>
    <ligand>
        <name>Mg(2+)</name>
        <dbReference type="ChEBI" id="CHEBI:18420"/>
        <label>1</label>
    </ligand>
</feature>
<feature type="binding site" evidence="1">
    <location>
        <position position="164"/>
    </location>
    <ligand>
        <name>Mg(2+)</name>
        <dbReference type="ChEBI" id="CHEBI:18420"/>
        <label>2</label>
    </ligand>
</feature>
<feature type="binding site" evidence="1">
    <location>
        <position position="185"/>
    </location>
    <ligand>
        <name>Mg(2+)</name>
        <dbReference type="ChEBI" id="CHEBI:18420"/>
        <label>2</label>
    </ligand>
</feature>
<feature type="binding site" evidence="1">
    <location>
        <position position="185"/>
    </location>
    <ligand>
        <name>Mg(2+)</name>
        <dbReference type="ChEBI" id="CHEBI:18420"/>
        <label>3</label>
    </ligand>
</feature>
<feature type="binding site" evidence="1">
    <location>
        <position position="187"/>
    </location>
    <ligand>
        <name>Mg(2+)</name>
        <dbReference type="ChEBI" id="CHEBI:18420"/>
        <label>2</label>
    </ligand>
</feature>
<feature type="binding site" evidence="1">
    <location>
        <begin position="188"/>
        <end position="191"/>
    </location>
    <ligand>
        <name>substrate</name>
    </ligand>
</feature>
<feature type="binding site" evidence="1">
    <location>
        <position position="188"/>
    </location>
    <ligand>
        <name>Mg(2+)</name>
        <dbReference type="ChEBI" id="CHEBI:18420"/>
        <label>3</label>
    </ligand>
</feature>
<feature type="binding site" evidence="1">
    <location>
        <position position="295"/>
    </location>
    <ligand>
        <name>substrate</name>
    </ligand>
</feature>
<feature type="binding site" evidence="1">
    <location>
        <position position="327"/>
    </location>
    <ligand>
        <name>substrate</name>
    </ligand>
</feature>
<feature type="binding site" evidence="1">
    <location>
        <position position="345"/>
    </location>
    <ligand>
        <name>substrate</name>
    </ligand>
</feature>
<feature type="binding site" evidence="1">
    <location>
        <position position="347"/>
    </location>
    <ligand>
        <name>substrate</name>
    </ligand>
</feature>
<feature type="binding site" evidence="1">
    <location>
        <position position="357"/>
    </location>
    <ligand>
        <name>substrate</name>
    </ligand>
</feature>
<feature type="binding site" evidence="1">
    <location>
        <position position="363"/>
    </location>
    <ligand>
        <name>Mg(2+)</name>
        <dbReference type="ChEBI" id="CHEBI:18420"/>
        <label>3</label>
    </ligand>
</feature>
<feature type="disulfide bond" description="Redox-active (light-modulated)" evidence="1">
    <location>
        <begin position="231"/>
        <end position="236"/>
    </location>
</feature>
<feature type="sequence conflict" description="In Ref. 2; AA sequence." evidence="4" ref="2">
    <original>E</original>
    <variation>Q</variation>
    <location>
        <position position="66"/>
    </location>
</feature>
<feature type="sequence conflict" description="In Ref. 2; AA sequence." evidence="4" ref="2">
    <original>E</original>
    <variation>P</variation>
    <location>
        <position position="88"/>
    </location>
</feature>
<feature type="sequence conflict" description="In Ref. 2; AA sequence." evidence="4" ref="2">
    <original>D</original>
    <variation>P</variation>
    <location>
        <position position="303"/>
    </location>
</feature>
<feature type="helix" evidence="5">
    <location>
        <begin position="80"/>
        <end position="86"/>
    </location>
</feature>
<feature type="helix" evidence="5">
    <location>
        <begin position="96"/>
        <end position="116"/>
    </location>
</feature>
<feature type="helix" evidence="5">
    <location>
        <begin position="140"/>
        <end position="142"/>
    </location>
</feature>
<feature type="helix" evidence="5">
    <location>
        <begin position="145"/>
        <end position="152"/>
    </location>
</feature>
<feature type="strand" evidence="5">
    <location>
        <begin position="158"/>
        <end position="162"/>
    </location>
</feature>
<feature type="strand" evidence="5">
    <location>
        <begin position="181"/>
        <end position="185"/>
    </location>
</feature>
<feature type="helix" evidence="5">
    <location>
        <begin position="190"/>
        <end position="193"/>
    </location>
</feature>
<feature type="strand" evidence="5">
    <location>
        <begin position="202"/>
        <end position="206"/>
    </location>
</feature>
<feature type="strand" evidence="5">
    <location>
        <begin position="239"/>
        <end position="260"/>
    </location>
</feature>
<feature type="strand" evidence="5">
    <location>
        <begin position="263"/>
        <end position="270"/>
    </location>
</feature>
<feature type="turn" evidence="5">
    <location>
        <begin position="271"/>
        <end position="274"/>
    </location>
</feature>
<feature type="strand" evidence="5">
    <location>
        <begin position="275"/>
        <end position="282"/>
    </location>
</feature>
<feature type="strand" evidence="5">
    <location>
        <begin position="291"/>
        <end position="293"/>
    </location>
</feature>
<feature type="helix" evidence="5">
    <location>
        <begin position="296"/>
        <end position="298"/>
    </location>
</feature>
<feature type="helix" evidence="5">
    <location>
        <begin position="304"/>
        <end position="313"/>
    </location>
</feature>
<feature type="strand" evidence="5">
    <location>
        <begin position="317"/>
        <end position="320"/>
    </location>
</feature>
<feature type="helix" evidence="5">
    <location>
        <begin position="331"/>
        <end position="341"/>
    </location>
</feature>
<feature type="strand" evidence="5">
    <location>
        <begin position="344"/>
        <end position="347"/>
    </location>
</feature>
<feature type="strand" evidence="5">
    <location>
        <begin position="349"/>
        <end position="353"/>
    </location>
</feature>
<feature type="strand" evidence="5">
    <location>
        <begin position="356"/>
        <end position="359"/>
    </location>
</feature>
<feature type="turn" evidence="5">
    <location>
        <begin position="360"/>
        <end position="363"/>
    </location>
</feature>
<feature type="helix" evidence="5">
    <location>
        <begin position="364"/>
        <end position="374"/>
    </location>
</feature>
<feature type="strand" evidence="5">
    <location>
        <begin position="377"/>
        <end position="388"/>
    </location>
</feature>
<feature type="strand" evidence="5">
    <location>
        <begin position="391"/>
        <end position="394"/>
    </location>
</feature>
<feature type="strand" evidence="5">
    <location>
        <begin position="399"/>
        <end position="402"/>
    </location>
</feature>
<feature type="helix" evidence="5">
    <location>
        <begin position="405"/>
        <end position="411"/>
    </location>
</feature>
<reference key="1">
    <citation type="journal article" date="1996" name="Plant Mol. Biol.">
        <title>Higher-plant chloroplast and cytosolic fructose-1,6-bisphosphatase isoenzymes: origins via duplication rather than prokaryote-eukaryote divergence.</title>
        <authorList>
            <person name="Martin W."/>
            <person name="Mustafa A.Z."/>
            <person name="Henze K."/>
            <person name="Schnarrenberger C."/>
        </authorList>
    </citation>
    <scope>NUCLEOTIDE SEQUENCE [MRNA]</scope>
    <source>
        <tissue>Seedling</tissue>
    </source>
</reference>
<reference key="2">
    <citation type="journal article" date="1990" name="Arch. Biochem. Biophys.">
        <title>Amino acid sequence of spinach chloroplast fructose-1,6-bisphosphatase.</title>
        <authorList>
            <person name="Marcus F."/>
            <person name="Harrsch P.B."/>
        </authorList>
    </citation>
    <scope>PROTEIN SEQUENCE OF 58-415</scope>
</reference>
<reference key="3">
    <citation type="journal article" date="1995" name="Biochemistry">
        <title>Structural aspects of the allosteric inhibition of fructose-1,6-bisphosphatase by AMP: the binding of both the substrate analogue 2,5-anhydro-D-glucitol 1,6-bisphosphate and catalytic metal ions monitored by X-ray crystallography.</title>
        <authorList>
            <person name="Villeret V."/>
            <person name="Huang S."/>
            <person name="Zhang Y."/>
            <person name="Lipscomb W.N."/>
        </authorList>
    </citation>
    <scope>X-RAY CRYSTALLOGRAPHY (2.8 ANGSTROMS)</scope>
</reference>
<comment type="catalytic activity">
    <reaction>
        <text>beta-D-fructose 1,6-bisphosphate + H2O = beta-D-fructose 6-phosphate + phosphate</text>
        <dbReference type="Rhea" id="RHEA:11064"/>
        <dbReference type="ChEBI" id="CHEBI:15377"/>
        <dbReference type="ChEBI" id="CHEBI:32966"/>
        <dbReference type="ChEBI" id="CHEBI:43474"/>
        <dbReference type="ChEBI" id="CHEBI:57634"/>
        <dbReference type="EC" id="3.1.3.11"/>
    </reaction>
</comment>
<comment type="cofactor">
    <cofactor evidence="1">
        <name>Mg(2+)</name>
        <dbReference type="ChEBI" id="CHEBI:18420"/>
    </cofactor>
    <text evidence="1">Binds 3 Mg(2+) ions per subunit.</text>
</comment>
<comment type="pathway">
    <text>Carbohydrate biosynthesis; Calvin cycle.</text>
</comment>
<comment type="subunit">
    <text>Homotetramer.</text>
</comment>
<comment type="subcellular location">
    <subcellularLocation>
        <location>Plastid</location>
        <location>Chloroplast</location>
    </subcellularLocation>
</comment>
<comment type="induction">
    <text>Light activation through pH changes, Mg(2+) levels and also by light-modulated reduction of essential disulfide groups via the ferredoxin-thioredoxin f system.</text>
</comment>
<comment type="miscellaneous">
    <text>In plants there are two FBPase isozymes: one in the cytosol and the other in the chloroplast.</text>
</comment>
<comment type="similarity">
    <text evidence="4">Belongs to the FBPase class 1 family.</text>
</comment>
<accession>P22418</accession>
<accession>O20251</accession>